<protein>
    <recommendedName>
        <fullName evidence="1">L-seryl-tRNA(Sec) selenium transferase</fullName>
        <ecNumber evidence="1">2.9.1.1</ecNumber>
    </recommendedName>
    <alternativeName>
        <fullName evidence="1">Selenocysteine synthase</fullName>
        <shortName evidence="1">Sec synthase</shortName>
    </alternativeName>
    <alternativeName>
        <fullName evidence="1">Selenocysteinyl-tRNA(Sec) synthase</fullName>
    </alternativeName>
</protein>
<proteinExistence type="inferred from homology"/>
<organism>
    <name type="scientific">Clostridium botulinum (strain ATCC 19397 / Type A)</name>
    <dbReference type="NCBI Taxonomy" id="441770"/>
    <lineage>
        <taxon>Bacteria</taxon>
        <taxon>Bacillati</taxon>
        <taxon>Bacillota</taxon>
        <taxon>Clostridia</taxon>
        <taxon>Eubacteriales</taxon>
        <taxon>Clostridiaceae</taxon>
        <taxon>Clostridium</taxon>
    </lineage>
</organism>
<comment type="function">
    <text evidence="1">Converts seryl-tRNA(Sec) to selenocysteinyl-tRNA(Sec) required for selenoprotein biosynthesis.</text>
</comment>
<comment type="catalytic activity">
    <reaction evidence="1">
        <text>L-seryl-tRNA(Sec) + selenophosphate + H(+) = L-selenocysteinyl-tRNA(Sec) + phosphate</text>
        <dbReference type="Rhea" id="RHEA:22728"/>
        <dbReference type="Rhea" id="RHEA-COMP:9742"/>
        <dbReference type="Rhea" id="RHEA-COMP:9743"/>
        <dbReference type="ChEBI" id="CHEBI:15378"/>
        <dbReference type="ChEBI" id="CHEBI:16144"/>
        <dbReference type="ChEBI" id="CHEBI:43474"/>
        <dbReference type="ChEBI" id="CHEBI:78533"/>
        <dbReference type="ChEBI" id="CHEBI:78573"/>
        <dbReference type="EC" id="2.9.1.1"/>
    </reaction>
</comment>
<comment type="cofactor">
    <cofactor evidence="1">
        <name>pyridoxal 5'-phosphate</name>
        <dbReference type="ChEBI" id="CHEBI:597326"/>
    </cofactor>
</comment>
<comment type="pathway">
    <text evidence="1">Aminoacyl-tRNA biosynthesis; selenocysteinyl-tRNA(Sec) biosynthesis; selenocysteinyl-tRNA(Sec) from L-seryl-tRNA(Sec) (bacterial route): step 1/1.</text>
</comment>
<comment type="subcellular location">
    <subcellularLocation>
        <location evidence="1">Cytoplasm</location>
    </subcellularLocation>
</comment>
<comment type="similarity">
    <text evidence="1">Belongs to the SelA family.</text>
</comment>
<sequence>MDKKQLLRNLPKIDELLKEEIVNRYLQENSRTLVVDSLRQSIDYYRGEILKNNIDSFTKENVVNYFIDTLEENKSTKFKKVINATGVVIHTNLGRSLLAKEAIENVVKVSENYSNLEYDLKEGKRGSRYSHVEELIKKVTGAEAAMVVNNNAAAVMLALNTLCEEREAIVSRGQLVEIGGSFRVPDVMKFSRAHLVEVGTTNRTHLYDYENNINENTGVLLKVHTSNFKIMGFTEEVSSEEMVQLGGKYKLPVMEDIGSGTLVDFSKYGFTYEPTVQSSLEKGVDVVTFSGDKMLGGPQAGIIVGKKKYIDKMKKNQLTRALRIDKMTLAALEGTLKCYIDEKEAIENIPTLNMILSSKDIHKKRAQRLKRRLQNNVKDFNFKVSEDLSMVGGGSMPGERIPTYVVKVNSDKITAEKIEEKLRLSKNPIIVRVSKDEVILDVRTLFERDFNIIVEEFKKLLK</sequence>
<accession>A7FXT6</accession>
<evidence type="ECO:0000255" key="1">
    <source>
        <dbReference type="HAMAP-Rule" id="MF_00423"/>
    </source>
</evidence>
<name>SELA_CLOB1</name>
<gene>
    <name evidence="1" type="primary">selA</name>
    <name type="ordered locus">CLB_3001</name>
</gene>
<dbReference type="EC" id="2.9.1.1" evidence="1"/>
<dbReference type="EMBL" id="CP000726">
    <property type="protein sequence ID" value="ABS32834.1"/>
    <property type="molecule type" value="Genomic_DNA"/>
</dbReference>
<dbReference type="RefSeq" id="WP_012048015.1">
    <property type="nucleotide sequence ID" value="NC_009697.1"/>
</dbReference>
<dbReference type="SMR" id="A7FXT6"/>
<dbReference type="GeneID" id="5187374"/>
<dbReference type="KEGG" id="cba:CLB_3001"/>
<dbReference type="HOGENOM" id="CLU_038142_1_0_9"/>
<dbReference type="UniPathway" id="UPA00906">
    <property type="reaction ID" value="UER00896"/>
</dbReference>
<dbReference type="GO" id="GO:0005737">
    <property type="term" value="C:cytoplasm"/>
    <property type="evidence" value="ECO:0007669"/>
    <property type="project" value="UniProtKB-SubCell"/>
</dbReference>
<dbReference type="GO" id="GO:0004125">
    <property type="term" value="F:L-seryl-tRNA(Sec) selenium transferase activity"/>
    <property type="evidence" value="ECO:0007669"/>
    <property type="project" value="UniProtKB-UniRule"/>
</dbReference>
<dbReference type="GO" id="GO:0001717">
    <property type="term" value="P:conversion of seryl-tRNAsec to selenocys-tRNAsec"/>
    <property type="evidence" value="ECO:0007669"/>
    <property type="project" value="UniProtKB-UniRule"/>
</dbReference>
<dbReference type="GO" id="GO:0001514">
    <property type="term" value="P:selenocysteine incorporation"/>
    <property type="evidence" value="ECO:0007669"/>
    <property type="project" value="UniProtKB-UniRule"/>
</dbReference>
<dbReference type="FunFam" id="3.40.640.10:FF:000028">
    <property type="entry name" value="L-seryl-tRNA(Sec) selenium transferase"/>
    <property type="match status" value="1"/>
</dbReference>
<dbReference type="Gene3D" id="3.90.1150.180">
    <property type="match status" value="1"/>
</dbReference>
<dbReference type="Gene3D" id="3.40.640.10">
    <property type="entry name" value="Type I PLP-dependent aspartate aminotransferase-like (Major domain)"/>
    <property type="match status" value="1"/>
</dbReference>
<dbReference type="HAMAP" id="MF_00423">
    <property type="entry name" value="SelA"/>
    <property type="match status" value="1"/>
</dbReference>
<dbReference type="InterPro" id="IPR015424">
    <property type="entry name" value="PyrdxlP-dep_Trfase"/>
</dbReference>
<dbReference type="InterPro" id="IPR015421">
    <property type="entry name" value="PyrdxlP-dep_Trfase_major"/>
</dbReference>
<dbReference type="InterPro" id="IPR018319">
    <property type="entry name" value="SelA-like"/>
</dbReference>
<dbReference type="InterPro" id="IPR004534">
    <property type="entry name" value="SelA_trans"/>
</dbReference>
<dbReference type="InterPro" id="IPR025862">
    <property type="entry name" value="SelA_trans_N_dom"/>
</dbReference>
<dbReference type="NCBIfam" id="TIGR00474">
    <property type="entry name" value="selA"/>
    <property type="match status" value="1"/>
</dbReference>
<dbReference type="PANTHER" id="PTHR32328">
    <property type="entry name" value="L-SERYL-TRNA(SEC) SELENIUM TRANSFERASE"/>
    <property type="match status" value="1"/>
</dbReference>
<dbReference type="PANTHER" id="PTHR32328:SF0">
    <property type="entry name" value="L-SERYL-TRNA(SEC) SELENIUM TRANSFERASE"/>
    <property type="match status" value="1"/>
</dbReference>
<dbReference type="Pfam" id="PF12390">
    <property type="entry name" value="Se-cys_synth_N"/>
    <property type="match status" value="1"/>
</dbReference>
<dbReference type="Pfam" id="PF03841">
    <property type="entry name" value="SelA"/>
    <property type="match status" value="1"/>
</dbReference>
<dbReference type="SUPFAM" id="SSF53383">
    <property type="entry name" value="PLP-dependent transferases"/>
    <property type="match status" value="1"/>
</dbReference>
<feature type="chain" id="PRO_1000072304" description="L-seryl-tRNA(Sec) selenium transferase">
    <location>
        <begin position="1"/>
        <end position="462"/>
    </location>
</feature>
<feature type="modified residue" description="N6-(pyridoxal phosphate)lysine" evidence="1">
    <location>
        <position position="293"/>
    </location>
</feature>
<reference key="1">
    <citation type="journal article" date="2007" name="PLoS ONE">
        <title>Analysis of the neurotoxin complex genes in Clostridium botulinum A1-A4 and B1 strains: BoNT/A3, /Ba4 and /B1 clusters are located within plasmids.</title>
        <authorList>
            <person name="Smith T.J."/>
            <person name="Hill K.K."/>
            <person name="Foley B.T."/>
            <person name="Detter J.C."/>
            <person name="Munk A.C."/>
            <person name="Bruce D.C."/>
            <person name="Doggett N.A."/>
            <person name="Smith L.A."/>
            <person name="Marks J.D."/>
            <person name="Xie G."/>
            <person name="Brettin T.S."/>
        </authorList>
    </citation>
    <scope>NUCLEOTIDE SEQUENCE [LARGE SCALE GENOMIC DNA]</scope>
    <source>
        <strain>ATCC 19397 / Type A</strain>
    </source>
</reference>
<keyword id="KW-0963">Cytoplasm</keyword>
<keyword id="KW-0648">Protein biosynthesis</keyword>
<keyword id="KW-0663">Pyridoxal phosphate</keyword>
<keyword id="KW-0711">Selenium</keyword>
<keyword id="KW-0808">Transferase</keyword>